<keyword id="KW-0007">Acetylation</keyword>
<keyword id="KW-0963">Cytoplasm</keyword>
<keyword id="KW-1017">Isopeptide bond</keyword>
<keyword id="KW-0539">Nucleus</keyword>
<keyword id="KW-0597">Phosphoprotein</keyword>
<keyword id="KW-0647">Proteasome</keyword>
<keyword id="KW-1185">Reference proteome</keyword>
<keyword id="KW-0832">Ubl conjugation</keyword>
<evidence type="ECO:0000250" key="1"/>
<evidence type="ECO:0000250" key="2">
    <source>
        <dbReference type="UniProtKB" id="Q16186"/>
    </source>
</evidence>
<evidence type="ECO:0000250" key="3">
    <source>
        <dbReference type="UniProtKB" id="Q9JMB5"/>
    </source>
</evidence>
<evidence type="ECO:0000255" key="4">
    <source>
        <dbReference type="PROSITE-ProRule" id="PRU01264"/>
    </source>
</evidence>
<evidence type="ECO:0000255" key="5">
    <source>
        <dbReference type="PROSITE-ProRule" id="PRU01265"/>
    </source>
</evidence>
<evidence type="ECO:0000256" key="6">
    <source>
        <dbReference type="SAM" id="MobiDB-lite"/>
    </source>
</evidence>
<evidence type="ECO:0000305" key="7"/>
<accession>A1L5A6</accession>
<name>ADRM1_BOVIN</name>
<feature type="initiator methionine" description="Removed" evidence="2">
    <location>
        <position position="1"/>
    </location>
</feature>
<feature type="chain" id="PRO_0000286070" description="Proteasomal ubiquitin receptor ADRM1">
    <location>
        <begin position="2"/>
        <end position="407"/>
    </location>
</feature>
<feature type="domain" description="Pru" evidence="5">
    <location>
        <begin position="18"/>
        <end position="131"/>
    </location>
</feature>
<feature type="domain" description="DEUBAD" evidence="4">
    <location>
        <begin position="277"/>
        <end position="391"/>
    </location>
</feature>
<feature type="region of interest" description="Interaction with PSMD1" evidence="1">
    <location>
        <begin position="2"/>
        <end position="132"/>
    </location>
</feature>
<feature type="region of interest" description="Disordered" evidence="6">
    <location>
        <begin position="196"/>
        <end position="259"/>
    </location>
</feature>
<feature type="region of interest" description="Interaction with UCHL5" evidence="1">
    <location>
        <begin position="362"/>
        <end position="407"/>
    </location>
</feature>
<feature type="region of interest" description="Disordered" evidence="6">
    <location>
        <begin position="378"/>
        <end position="407"/>
    </location>
</feature>
<feature type="modified residue" description="N-acetylthreonine" evidence="2">
    <location>
        <position position="2"/>
    </location>
</feature>
<feature type="modified residue" description="Phosphoserine" evidence="2">
    <location>
        <position position="15"/>
    </location>
</feature>
<feature type="modified residue" description="Phosphotyrosine" evidence="2">
    <location>
        <position position="127"/>
    </location>
</feature>
<feature type="modified residue" description="Phosphoserine" evidence="2">
    <location>
        <position position="140"/>
    </location>
</feature>
<feature type="modified residue" description="Phosphoserine" evidence="2">
    <location>
        <position position="211"/>
    </location>
</feature>
<feature type="modified residue" description="Phosphothreonine" evidence="2">
    <location>
        <position position="217"/>
    </location>
</feature>
<feature type="modified residue" description="Phosphoserine" evidence="3">
    <location>
        <position position="405"/>
    </location>
</feature>
<feature type="cross-link" description="Glycyl lysine isopeptide (Lys-Gly) (interchain with G-Cter in ubiquitin)" evidence="2">
    <location>
        <position position="34"/>
    </location>
</feature>
<dbReference type="EMBL" id="BT029893">
    <property type="protein sequence ID" value="ABM21559.1"/>
    <property type="molecule type" value="mRNA"/>
</dbReference>
<dbReference type="RefSeq" id="NP_001073751.1">
    <property type="nucleotide sequence ID" value="NM_001080282.1"/>
</dbReference>
<dbReference type="RefSeq" id="XP_059748591.1">
    <property type="nucleotide sequence ID" value="XM_059892608.1"/>
</dbReference>
<dbReference type="SMR" id="A1L5A6"/>
<dbReference type="FunCoup" id="A1L5A6">
    <property type="interactions" value="3359"/>
</dbReference>
<dbReference type="STRING" id="9913.ENSBTAP00000003974"/>
<dbReference type="PaxDb" id="9913-ENSBTAP00000003974"/>
<dbReference type="PeptideAtlas" id="A1L5A6"/>
<dbReference type="Ensembl" id="ENSBTAT00000003974.6">
    <property type="protein sequence ID" value="ENSBTAP00000003974.4"/>
    <property type="gene ID" value="ENSBTAG00000003058.6"/>
</dbReference>
<dbReference type="GeneID" id="519729"/>
<dbReference type="KEGG" id="bta:519729"/>
<dbReference type="CTD" id="11047"/>
<dbReference type="VEuPathDB" id="HostDB:ENSBTAG00000003058"/>
<dbReference type="VGNC" id="VGNC:25699">
    <property type="gene designation" value="ADRM1"/>
</dbReference>
<dbReference type="eggNOG" id="KOG3037">
    <property type="taxonomic scope" value="Eukaryota"/>
</dbReference>
<dbReference type="GeneTree" id="ENSGT00390000013839"/>
<dbReference type="HOGENOM" id="CLU_041798_2_0_1"/>
<dbReference type="InParanoid" id="A1L5A6"/>
<dbReference type="OMA" id="SNQRHFF"/>
<dbReference type="OrthoDB" id="340431at2759"/>
<dbReference type="TreeFam" id="TF313410"/>
<dbReference type="Reactome" id="R-BTA-1169091">
    <property type="pathway name" value="Activation of NF-kappaB in B cells"/>
</dbReference>
<dbReference type="Reactome" id="R-BTA-1234176">
    <property type="pathway name" value="Oxygen-dependent proline hydroxylation of Hypoxia-inducible Factor Alpha"/>
</dbReference>
<dbReference type="Reactome" id="R-BTA-1236978">
    <property type="pathway name" value="Cross-presentation of soluble exogenous antigens (endosomes)"/>
</dbReference>
<dbReference type="Reactome" id="R-BTA-174084">
    <property type="pathway name" value="Autodegradation of Cdh1 by Cdh1:APC/C"/>
</dbReference>
<dbReference type="Reactome" id="R-BTA-174154">
    <property type="pathway name" value="APC/C:Cdc20 mediated degradation of Securin"/>
</dbReference>
<dbReference type="Reactome" id="R-BTA-174178">
    <property type="pathway name" value="APC/C:Cdh1 mediated degradation of Cdc20 and other APC/C:Cdh1 targeted proteins in late mitosis/early G1"/>
</dbReference>
<dbReference type="Reactome" id="R-BTA-174184">
    <property type="pathway name" value="Cdc20:Phospho-APC/C mediated degradation of Cyclin A"/>
</dbReference>
<dbReference type="Reactome" id="R-BTA-187577">
    <property type="pathway name" value="SCF(Skp2)-mediated degradation of p27/p21"/>
</dbReference>
<dbReference type="Reactome" id="R-BTA-195253">
    <property type="pathway name" value="Degradation of beta-catenin by the destruction complex"/>
</dbReference>
<dbReference type="Reactome" id="R-BTA-202424">
    <property type="pathway name" value="Downstream TCR signaling"/>
</dbReference>
<dbReference type="Reactome" id="R-BTA-2467813">
    <property type="pathway name" value="Separation of Sister Chromatids"/>
</dbReference>
<dbReference type="Reactome" id="R-BTA-2871837">
    <property type="pathway name" value="FCERI mediated NF-kB activation"/>
</dbReference>
<dbReference type="Reactome" id="R-BTA-349425">
    <property type="pathway name" value="Autodegradation of the E3 ubiquitin ligase COP1"/>
</dbReference>
<dbReference type="Reactome" id="R-BTA-350562">
    <property type="pathway name" value="Regulation of ornithine decarboxylase (ODC)"/>
</dbReference>
<dbReference type="Reactome" id="R-BTA-382556">
    <property type="pathway name" value="ABC-family proteins mediated transport"/>
</dbReference>
<dbReference type="Reactome" id="R-BTA-450408">
    <property type="pathway name" value="AUF1 (hnRNP D0) binds and destabilizes mRNA"/>
</dbReference>
<dbReference type="Reactome" id="R-BTA-4608870">
    <property type="pathway name" value="Asymmetric localization of PCP proteins"/>
</dbReference>
<dbReference type="Reactome" id="R-BTA-4641257">
    <property type="pathway name" value="Degradation of AXIN"/>
</dbReference>
<dbReference type="Reactome" id="R-BTA-4641258">
    <property type="pathway name" value="Degradation of DVL"/>
</dbReference>
<dbReference type="Reactome" id="R-BTA-5358346">
    <property type="pathway name" value="Hedgehog ligand biogenesis"/>
</dbReference>
<dbReference type="Reactome" id="R-BTA-5607761">
    <property type="pathway name" value="Dectin-1 mediated noncanonical NF-kB signaling"/>
</dbReference>
<dbReference type="Reactome" id="R-BTA-5607764">
    <property type="pathway name" value="CLEC7A (Dectin-1) signaling"/>
</dbReference>
<dbReference type="Reactome" id="R-BTA-5610780">
    <property type="pathway name" value="Degradation of GLI1 by the proteasome"/>
</dbReference>
<dbReference type="Reactome" id="R-BTA-5610785">
    <property type="pathway name" value="GLI3 is processed to GLI3R by the proteasome"/>
</dbReference>
<dbReference type="Reactome" id="R-BTA-5632684">
    <property type="pathway name" value="Hedgehog 'on' state"/>
</dbReference>
<dbReference type="Reactome" id="R-BTA-5668541">
    <property type="pathway name" value="TNFR2 non-canonical NF-kB pathway"/>
</dbReference>
<dbReference type="Reactome" id="R-BTA-5676590">
    <property type="pathway name" value="NIK--&gt;noncanonical NF-kB signaling"/>
</dbReference>
<dbReference type="Reactome" id="R-BTA-5687128">
    <property type="pathway name" value="MAPK6/MAPK4 signaling"/>
</dbReference>
<dbReference type="Reactome" id="R-BTA-5689603">
    <property type="pathway name" value="UCH proteinases"/>
</dbReference>
<dbReference type="Reactome" id="R-BTA-5689880">
    <property type="pathway name" value="Ub-specific processing proteases"/>
</dbReference>
<dbReference type="Reactome" id="R-BTA-68867">
    <property type="pathway name" value="Assembly of the pre-replicative complex"/>
</dbReference>
<dbReference type="Reactome" id="R-BTA-68949">
    <property type="pathway name" value="Orc1 removal from chromatin"/>
</dbReference>
<dbReference type="Reactome" id="R-BTA-69017">
    <property type="pathway name" value="CDK-mediated phosphorylation and removal of Cdc6"/>
</dbReference>
<dbReference type="Reactome" id="R-BTA-69481">
    <property type="pathway name" value="G2/M Checkpoints"/>
</dbReference>
<dbReference type="Reactome" id="R-BTA-69601">
    <property type="pathway name" value="Ubiquitin Mediated Degradation of Phosphorylated Cdc25A"/>
</dbReference>
<dbReference type="Reactome" id="R-BTA-75815">
    <property type="pathway name" value="Ubiquitin-dependent degradation of Cyclin D"/>
</dbReference>
<dbReference type="Reactome" id="R-BTA-8852276">
    <property type="pathway name" value="The role of GTSE1 in G2/M progression after G2 checkpoint"/>
</dbReference>
<dbReference type="Reactome" id="R-BTA-8854050">
    <property type="pathway name" value="FBXL7 down-regulates AURKA during mitotic entry and in early mitosis"/>
</dbReference>
<dbReference type="Reactome" id="R-BTA-8939236">
    <property type="pathway name" value="RUNX1 regulates transcription of genes involved in differentiation of HSCs"/>
</dbReference>
<dbReference type="Reactome" id="R-BTA-8939902">
    <property type="pathway name" value="Regulation of RUNX2 expression and activity"/>
</dbReference>
<dbReference type="Reactome" id="R-BTA-8941858">
    <property type="pathway name" value="Regulation of RUNX3 expression and activity"/>
</dbReference>
<dbReference type="Reactome" id="R-BTA-8948751">
    <property type="pathway name" value="Regulation of PTEN stability and activity"/>
</dbReference>
<dbReference type="Reactome" id="R-BTA-8951664">
    <property type="pathway name" value="Neddylation"/>
</dbReference>
<dbReference type="Reactome" id="R-BTA-9020702">
    <property type="pathway name" value="Interleukin-1 signaling"/>
</dbReference>
<dbReference type="Reactome" id="R-BTA-9755511">
    <property type="pathway name" value="KEAP1-NFE2L2 pathway"/>
</dbReference>
<dbReference type="Reactome" id="R-BTA-9762114">
    <property type="pathway name" value="GSK3B and BTRC:CUL1-mediated-degradation of NFE2L2"/>
</dbReference>
<dbReference type="Reactome" id="R-BTA-983168">
    <property type="pathway name" value="Antigen processing: Ubiquitination &amp; Proteasome degradation"/>
</dbReference>
<dbReference type="Reactome" id="R-BTA-9907900">
    <property type="pathway name" value="Proteasome assembly"/>
</dbReference>
<dbReference type="Proteomes" id="UP000009136">
    <property type="component" value="Chromosome 13"/>
</dbReference>
<dbReference type="Bgee" id="ENSBTAG00000003058">
    <property type="expression patterns" value="Expressed in spermatid and 105 other cell types or tissues"/>
</dbReference>
<dbReference type="GO" id="GO:0005829">
    <property type="term" value="C:cytosol"/>
    <property type="evidence" value="ECO:0000304"/>
    <property type="project" value="Reactome"/>
</dbReference>
<dbReference type="GO" id="GO:0005634">
    <property type="term" value="C:nucleus"/>
    <property type="evidence" value="ECO:0007669"/>
    <property type="project" value="UniProtKB-SubCell"/>
</dbReference>
<dbReference type="GO" id="GO:0000502">
    <property type="term" value="C:proteasome complex"/>
    <property type="evidence" value="ECO:0000250"/>
    <property type="project" value="UniProtKB"/>
</dbReference>
<dbReference type="GO" id="GO:0008541">
    <property type="term" value="C:proteasome regulatory particle, lid subcomplex"/>
    <property type="evidence" value="ECO:0000318"/>
    <property type="project" value="GO_Central"/>
</dbReference>
<dbReference type="GO" id="GO:0061133">
    <property type="term" value="F:endopeptidase activator activity"/>
    <property type="evidence" value="ECO:0000250"/>
    <property type="project" value="UniProtKB"/>
</dbReference>
<dbReference type="GO" id="GO:0070628">
    <property type="term" value="F:proteasome binding"/>
    <property type="evidence" value="ECO:0000318"/>
    <property type="project" value="GO_Central"/>
</dbReference>
<dbReference type="GO" id="GO:0043248">
    <property type="term" value="P:proteasome assembly"/>
    <property type="evidence" value="ECO:0000250"/>
    <property type="project" value="UniProtKB"/>
</dbReference>
<dbReference type="CDD" id="cd13314">
    <property type="entry name" value="PH_Rpn13"/>
    <property type="match status" value="1"/>
</dbReference>
<dbReference type="FunFam" id="1.10.2020.20:FF:000001">
    <property type="entry name" value="Proteasomal ubiquitin receptor ADRM1"/>
    <property type="match status" value="1"/>
</dbReference>
<dbReference type="FunFam" id="2.30.29.70:FF:000001">
    <property type="entry name" value="Proteasomal ubiquitin receptor ADRM1"/>
    <property type="match status" value="1"/>
</dbReference>
<dbReference type="Gene3D" id="1.10.2020.20">
    <property type="match status" value="1"/>
</dbReference>
<dbReference type="Gene3D" id="2.30.29.70">
    <property type="entry name" value="Proteasomal ubiquitin receptor Rpn13/ADRM1"/>
    <property type="match status" value="1"/>
</dbReference>
<dbReference type="InterPro" id="IPR044867">
    <property type="entry name" value="DEUBAD_dom"/>
</dbReference>
<dbReference type="InterPro" id="IPR006773">
    <property type="entry name" value="Rpn13/ADRM1"/>
</dbReference>
<dbReference type="InterPro" id="IPR044868">
    <property type="entry name" value="Rpn13/ADRM1_Pru"/>
</dbReference>
<dbReference type="InterPro" id="IPR038633">
    <property type="entry name" value="Rpn13/ADRM1_Pru_sf"/>
</dbReference>
<dbReference type="InterPro" id="IPR032368">
    <property type="entry name" value="RPN13_DEUBAD"/>
</dbReference>
<dbReference type="InterPro" id="IPR038108">
    <property type="entry name" value="RPN13_DEUBAD_sf"/>
</dbReference>
<dbReference type="PANTHER" id="PTHR12225">
    <property type="entry name" value="ADHESION REGULATING MOLECULE 1 110 KDA CELL MEMBRANE GLYCOPROTEIN"/>
    <property type="match status" value="1"/>
</dbReference>
<dbReference type="PANTHER" id="PTHR12225:SF0">
    <property type="entry name" value="PROTEASOMAL UBIQUITIN RECEPTOR ADRM1"/>
    <property type="match status" value="1"/>
</dbReference>
<dbReference type="Pfam" id="PF04683">
    <property type="entry name" value="Rpn13_ADRM1_Pru"/>
    <property type="match status" value="1"/>
</dbReference>
<dbReference type="Pfam" id="PF16550">
    <property type="entry name" value="RPN13_C"/>
    <property type="match status" value="1"/>
</dbReference>
<dbReference type="PROSITE" id="PS51916">
    <property type="entry name" value="DEUBAD"/>
    <property type="match status" value="1"/>
</dbReference>
<dbReference type="PROSITE" id="PS51917">
    <property type="entry name" value="PRU"/>
    <property type="match status" value="1"/>
</dbReference>
<gene>
    <name type="primary">ADRM1</name>
</gene>
<comment type="function">
    <text evidence="2">Component of the 26S proteasome, a multiprotein complex involved in the ATP-dependent degradation of ubiquitinated proteins. This complex plays a key role in the maintenance of protein homeostasis by removing misfolded or damaged proteins, which could impair cellular functions, and by removing proteins whose functions are no longer required. Therefore, the proteasome participates in numerous cellular processes, including cell cycle progression, apoptosis, or DNA damage repair. Within the complex, functions as a proteasomal ubiquitin receptor. Engages and activates 19S-associated deubiquitinases UCHL5 and PSMD14 during protein degradation. UCHL5 reversibly associate with the 19S regulatory particle whereas PSMD14 is an intrinsic subunit of the proteasome lid subcomplex.</text>
</comment>
<comment type="subunit">
    <text evidence="2">Component of the 19S proteasome regulatory particle complex. The 26S proteasome consists of a 20S core particle (CP) and two 19S regulatory subunits (RP). Interacts with the proteasomal scaffolding protein PSMD1. Interacts with deubiquitinase UCHL5; this interaction activates the auto-inhibited UCHL5 by deoligomerizing it. Interacts with UBQLN2 and ubiquitin.</text>
</comment>
<comment type="subcellular location">
    <subcellularLocation>
        <location evidence="2">Cytoplasm</location>
    </subcellularLocation>
    <subcellularLocation>
        <location evidence="2">Nucleus</location>
    </subcellularLocation>
</comment>
<comment type="domain">
    <text evidence="2">The Pru (pleckstrin-like receptor for ubiquitin) domain mediates interactions with PSMD1 and ubiquitin. Preferential binding to the proximal subunit of 'Lys-48'-linked diubiquitin allows UCHL5 access to the distal subunit.</text>
</comment>
<comment type="PTM">
    <text evidence="2">Ubiquitinated by UBE3C in response to proteotoxic stress.</text>
</comment>
<comment type="similarity">
    <text evidence="7">Belongs to the ADRM1 family.</text>
</comment>
<protein>
    <recommendedName>
        <fullName>Proteasomal ubiquitin receptor ADRM1</fullName>
    </recommendedName>
    <alternativeName>
        <fullName>Rpn13 homolog</fullName>
    </alternativeName>
</protein>
<reference key="1">
    <citation type="journal article" date="2005" name="BMC Genomics">
        <title>Characterization of 954 bovine full-CDS cDNA sequences.</title>
        <authorList>
            <person name="Harhay G.P."/>
            <person name="Sonstegard T.S."/>
            <person name="Keele J.W."/>
            <person name="Heaton M.P."/>
            <person name="Clawson M.L."/>
            <person name="Snelling W.M."/>
            <person name="Wiedmann R.T."/>
            <person name="Van Tassell C.P."/>
            <person name="Smith T.P.L."/>
        </authorList>
    </citation>
    <scope>NUCLEOTIDE SEQUENCE [LARGE SCALE MRNA]</scope>
</reference>
<sequence>MTTSGALFPSLVPGSRGSSNKYLVEFRAGKMSLKGTTVTPDKRKGLVYIQQTDDSLIHFCWKDRTSGNVEDDLIIFPDDCEFKRVPQCPSGRVYVLKFKAGSKRLFFWMQEPKTDQDEEHCRKVNEYLNNPPMPGALGASGSGGHELSALGGEGGLQSLLGNMSHSQLMQLIGPAGLGGLGGLGALTGPGLASLLGSGGPPASSSSSSSRSQSAAVTPSSTTSSTRATPAPSAPAAASATSPSPAPSSGDGASTAASPAQPIQLSDLQSILATMSVPAGPGGGQQVDLASVLTPEIMAPILANADVQERLLPYLPSGESLPQTAEEIQNTLTSPQFQQALGMFSAALASGQLGPLMCQFGLPAEAVEAANKGDVEAFAKAMQNSASPEQQEGDGKDKKDEEEDMSLD</sequence>
<organism>
    <name type="scientific">Bos taurus</name>
    <name type="common">Bovine</name>
    <dbReference type="NCBI Taxonomy" id="9913"/>
    <lineage>
        <taxon>Eukaryota</taxon>
        <taxon>Metazoa</taxon>
        <taxon>Chordata</taxon>
        <taxon>Craniata</taxon>
        <taxon>Vertebrata</taxon>
        <taxon>Euteleostomi</taxon>
        <taxon>Mammalia</taxon>
        <taxon>Eutheria</taxon>
        <taxon>Laurasiatheria</taxon>
        <taxon>Artiodactyla</taxon>
        <taxon>Ruminantia</taxon>
        <taxon>Pecora</taxon>
        <taxon>Bovidae</taxon>
        <taxon>Bovinae</taxon>
        <taxon>Bos</taxon>
    </lineage>
</organism>
<proteinExistence type="evidence at transcript level"/>